<evidence type="ECO:0000255" key="1">
    <source>
        <dbReference type="HAMAP-Rule" id="MF_01265"/>
    </source>
</evidence>
<organism>
    <name type="scientific">Methanococcus maripaludis (strain C7 / ATCC BAA-1331)</name>
    <dbReference type="NCBI Taxonomy" id="426368"/>
    <lineage>
        <taxon>Archaea</taxon>
        <taxon>Methanobacteriati</taxon>
        <taxon>Methanobacteriota</taxon>
        <taxon>Methanomada group</taxon>
        <taxon>Methanococci</taxon>
        <taxon>Methanococcales</taxon>
        <taxon>Methanococcaceae</taxon>
        <taxon>Methanococcus</taxon>
    </lineage>
</organism>
<name>ASPD_METM7</name>
<proteinExistence type="inferred from homology"/>
<comment type="function">
    <text evidence="1">Specifically catalyzes the NAD or NADP-dependent dehydrogenation of L-aspartate to iminoaspartate.</text>
</comment>
<comment type="catalytic activity">
    <reaction evidence="1">
        <text>L-aspartate + NADP(+) + H2O = oxaloacetate + NH4(+) + NADPH + H(+)</text>
        <dbReference type="Rhea" id="RHEA:11784"/>
        <dbReference type="ChEBI" id="CHEBI:15377"/>
        <dbReference type="ChEBI" id="CHEBI:15378"/>
        <dbReference type="ChEBI" id="CHEBI:16452"/>
        <dbReference type="ChEBI" id="CHEBI:28938"/>
        <dbReference type="ChEBI" id="CHEBI:29991"/>
        <dbReference type="ChEBI" id="CHEBI:57783"/>
        <dbReference type="ChEBI" id="CHEBI:58349"/>
        <dbReference type="EC" id="1.4.1.21"/>
    </reaction>
</comment>
<comment type="catalytic activity">
    <reaction evidence="1">
        <text>L-aspartate + NAD(+) + H2O = oxaloacetate + NH4(+) + NADH + H(+)</text>
        <dbReference type="Rhea" id="RHEA:11788"/>
        <dbReference type="ChEBI" id="CHEBI:15377"/>
        <dbReference type="ChEBI" id="CHEBI:15378"/>
        <dbReference type="ChEBI" id="CHEBI:16452"/>
        <dbReference type="ChEBI" id="CHEBI:28938"/>
        <dbReference type="ChEBI" id="CHEBI:29991"/>
        <dbReference type="ChEBI" id="CHEBI:57540"/>
        <dbReference type="ChEBI" id="CHEBI:57945"/>
        <dbReference type="EC" id="1.4.1.21"/>
    </reaction>
</comment>
<comment type="pathway">
    <text evidence="1">Cofactor biosynthesis; NAD(+) biosynthesis; iminoaspartate from L-aspartate (dehydrogenase route): step 1/1.</text>
</comment>
<comment type="miscellaneous">
    <text evidence="1">The iminoaspartate product is unstable in aqueous solution and can decompose to oxaloacetate and ammonia.</text>
</comment>
<comment type="similarity">
    <text evidence="1">Belongs to the L-aspartate dehydrogenase family.</text>
</comment>
<keyword id="KW-0520">NAD</keyword>
<keyword id="KW-0521">NADP</keyword>
<keyword id="KW-0560">Oxidoreductase</keyword>
<keyword id="KW-0662">Pyridine nucleotide biosynthesis</keyword>
<gene>
    <name evidence="1" type="primary">nadX</name>
    <name type="ordered locus">MmarC7_1758</name>
</gene>
<feature type="chain" id="PRO_1000067307" description="L-aspartate dehydrogenase">
    <location>
        <begin position="1"/>
        <end position="267"/>
    </location>
</feature>
<feature type="active site" evidence="1">
    <location>
        <position position="218"/>
    </location>
</feature>
<feature type="binding site" evidence="1">
    <location>
        <position position="124"/>
    </location>
    <ligand>
        <name>NAD(+)</name>
        <dbReference type="ChEBI" id="CHEBI:57540"/>
    </ligand>
</feature>
<feature type="binding site" evidence="1">
    <location>
        <position position="190"/>
    </location>
    <ligand>
        <name>NAD(+)</name>
        <dbReference type="ChEBI" id="CHEBI:57540"/>
    </ligand>
</feature>
<reference key="1">
    <citation type="submission" date="2007-06" db="EMBL/GenBank/DDBJ databases">
        <title>Complete sequence of Methanococcus maripaludis C7.</title>
        <authorList>
            <consortium name="US DOE Joint Genome Institute"/>
            <person name="Copeland A."/>
            <person name="Lucas S."/>
            <person name="Lapidus A."/>
            <person name="Barry K."/>
            <person name="Glavina del Rio T."/>
            <person name="Dalin E."/>
            <person name="Tice H."/>
            <person name="Pitluck S."/>
            <person name="Clum A."/>
            <person name="Schmutz J."/>
            <person name="Larimer F."/>
            <person name="Land M."/>
            <person name="Hauser L."/>
            <person name="Kyrpides N."/>
            <person name="Anderson I."/>
            <person name="Sieprawska-Lupa M."/>
            <person name="Whitman W.B."/>
            <person name="Richardson P."/>
        </authorList>
    </citation>
    <scope>NUCLEOTIDE SEQUENCE [LARGE SCALE GENOMIC DNA]</scope>
    <source>
        <strain>C7 / ATCC BAA-1331</strain>
    </source>
</reference>
<sequence>MLKIGVVGCGAIASLITKALMSDRLNKAEVLAFYDGNLEKAEKLAMETGADFCRSLDELVSKDLDLIVECASVTAVEDTVIKSLNNDKDVIVMSVGAFADKDLFLKLYKLAEKLGRKIYIPSGAIAGIDAVKSGSLGKISEVTLTTTKPVHGLKSALEEQGLNTDDIMDPKVVFEGTVFEAISKFPQNINVSVVLSLASKYPAKVKIIADPNLMVNRHEILVKGSIGTIKTCVENNPCKDNPKTSALAAYSAIQLIKDLSEPVRIGT</sequence>
<accession>A6VK38</accession>
<dbReference type="EC" id="1.4.1.21" evidence="1"/>
<dbReference type="EMBL" id="CP000745">
    <property type="protein sequence ID" value="ABR66814.1"/>
    <property type="molecule type" value="Genomic_DNA"/>
</dbReference>
<dbReference type="SMR" id="A6VK38"/>
<dbReference type="STRING" id="426368.MmarC7_1758"/>
<dbReference type="KEGG" id="mmz:MmarC7_1758"/>
<dbReference type="eggNOG" id="arCOG00254">
    <property type="taxonomic scope" value="Archaea"/>
</dbReference>
<dbReference type="HOGENOM" id="CLU_089550_0_0_2"/>
<dbReference type="OrthoDB" id="15415at2157"/>
<dbReference type="UniPathway" id="UPA00253">
    <property type="reaction ID" value="UER00456"/>
</dbReference>
<dbReference type="GO" id="GO:0033735">
    <property type="term" value="F:aspartate dehydrogenase activity"/>
    <property type="evidence" value="ECO:0007669"/>
    <property type="project" value="UniProtKB-EC"/>
</dbReference>
<dbReference type="GO" id="GO:0051287">
    <property type="term" value="F:NAD binding"/>
    <property type="evidence" value="ECO:0007669"/>
    <property type="project" value="UniProtKB-UniRule"/>
</dbReference>
<dbReference type="GO" id="GO:0050661">
    <property type="term" value="F:NADP binding"/>
    <property type="evidence" value="ECO:0007669"/>
    <property type="project" value="UniProtKB-UniRule"/>
</dbReference>
<dbReference type="GO" id="GO:0016639">
    <property type="term" value="F:oxidoreductase activity, acting on the CH-NH2 group of donors, NAD or NADP as acceptor"/>
    <property type="evidence" value="ECO:0007669"/>
    <property type="project" value="UniProtKB-UniRule"/>
</dbReference>
<dbReference type="GO" id="GO:0009435">
    <property type="term" value="P:NAD biosynthetic process"/>
    <property type="evidence" value="ECO:0007669"/>
    <property type="project" value="UniProtKB-UniRule"/>
</dbReference>
<dbReference type="Gene3D" id="3.30.360.10">
    <property type="entry name" value="Dihydrodipicolinate Reductase, domain 2"/>
    <property type="match status" value="1"/>
</dbReference>
<dbReference type="Gene3D" id="3.40.50.720">
    <property type="entry name" value="NAD(P)-binding Rossmann-like Domain"/>
    <property type="match status" value="1"/>
</dbReference>
<dbReference type="HAMAP" id="MF_01265">
    <property type="entry name" value="NadX"/>
    <property type="match status" value="1"/>
</dbReference>
<dbReference type="InterPro" id="IPR005106">
    <property type="entry name" value="Asp/hSer_DH_NAD-bd"/>
</dbReference>
<dbReference type="InterPro" id="IPR002811">
    <property type="entry name" value="Asp_DH"/>
</dbReference>
<dbReference type="InterPro" id="IPR022487">
    <property type="entry name" value="Asp_DH_arc"/>
</dbReference>
<dbReference type="InterPro" id="IPR020626">
    <property type="entry name" value="Asp_DH_prok"/>
</dbReference>
<dbReference type="InterPro" id="IPR011182">
    <property type="entry name" value="L-Asp_DH"/>
</dbReference>
<dbReference type="InterPro" id="IPR036291">
    <property type="entry name" value="NAD(P)-bd_dom_sf"/>
</dbReference>
<dbReference type="NCBIfam" id="TIGR03855">
    <property type="entry name" value="NAD_NadX"/>
    <property type="match status" value="1"/>
</dbReference>
<dbReference type="NCBIfam" id="NF009830">
    <property type="entry name" value="PRK13304.1"/>
    <property type="match status" value="1"/>
</dbReference>
<dbReference type="PANTHER" id="PTHR31873:SF6">
    <property type="entry name" value="ASPARTATE DEHYDROGENASE DOMAIN-CONTAINING PROTEIN"/>
    <property type="match status" value="1"/>
</dbReference>
<dbReference type="PANTHER" id="PTHR31873">
    <property type="entry name" value="L-ASPARTATE DEHYDROGENASE-RELATED"/>
    <property type="match status" value="1"/>
</dbReference>
<dbReference type="Pfam" id="PF01958">
    <property type="entry name" value="Asp_DH_C"/>
    <property type="match status" value="1"/>
</dbReference>
<dbReference type="Pfam" id="PF03447">
    <property type="entry name" value="NAD_binding_3"/>
    <property type="match status" value="1"/>
</dbReference>
<dbReference type="PIRSF" id="PIRSF005227">
    <property type="entry name" value="Asp_dh_NAD_syn"/>
    <property type="match status" value="1"/>
</dbReference>
<dbReference type="SUPFAM" id="SSF55347">
    <property type="entry name" value="Glyceraldehyde-3-phosphate dehydrogenase-like, C-terminal domain"/>
    <property type="match status" value="1"/>
</dbReference>
<dbReference type="SUPFAM" id="SSF51735">
    <property type="entry name" value="NAD(P)-binding Rossmann-fold domains"/>
    <property type="match status" value="1"/>
</dbReference>
<protein>
    <recommendedName>
        <fullName evidence="1">L-aspartate dehydrogenase</fullName>
        <ecNumber evidence="1">1.4.1.21</ecNumber>
    </recommendedName>
</protein>